<protein>
    <recommendedName>
        <fullName evidence="1">UPF0178 protein PP_5221</fullName>
    </recommendedName>
</protein>
<name>Y5221_PSEPK</name>
<evidence type="ECO:0000255" key="1">
    <source>
        <dbReference type="HAMAP-Rule" id="MF_00489"/>
    </source>
</evidence>
<evidence type="ECO:0000305" key="2"/>
<sequence>MRVWIDADACPKAAKDLIVKFALKRKFEVVMVAGQAVAKPAFAIVRLIVVPSGMDAADDYIVEHAVPGELVICSDVPLADRLVKKGVAALDPRGREFDERNMGDRLAARNLFTELREQGQVGGGQAAYGEREKQAFANALDRIIARLSKG</sequence>
<feature type="chain" id="PRO_0000175996" description="UPF0178 protein PP_5221">
    <location>
        <begin position="1"/>
        <end position="150"/>
    </location>
</feature>
<accession>Q88CG0</accession>
<comment type="similarity">
    <text evidence="1">Belongs to the UPF0178 family.</text>
</comment>
<comment type="sequence caution" evidence="2">
    <conflict type="erroneous initiation">
        <sequence resource="EMBL-CDS" id="AAN70786"/>
    </conflict>
</comment>
<reference key="1">
    <citation type="journal article" date="2002" name="Environ. Microbiol.">
        <title>Complete genome sequence and comparative analysis of the metabolically versatile Pseudomonas putida KT2440.</title>
        <authorList>
            <person name="Nelson K.E."/>
            <person name="Weinel C."/>
            <person name="Paulsen I.T."/>
            <person name="Dodson R.J."/>
            <person name="Hilbert H."/>
            <person name="Martins dos Santos V.A.P."/>
            <person name="Fouts D.E."/>
            <person name="Gill S.R."/>
            <person name="Pop M."/>
            <person name="Holmes M."/>
            <person name="Brinkac L.M."/>
            <person name="Beanan M.J."/>
            <person name="DeBoy R.T."/>
            <person name="Daugherty S.C."/>
            <person name="Kolonay J.F."/>
            <person name="Madupu R."/>
            <person name="Nelson W.C."/>
            <person name="White O."/>
            <person name="Peterson J.D."/>
            <person name="Khouri H.M."/>
            <person name="Hance I."/>
            <person name="Chris Lee P."/>
            <person name="Holtzapple E.K."/>
            <person name="Scanlan D."/>
            <person name="Tran K."/>
            <person name="Moazzez A."/>
            <person name="Utterback T.R."/>
            <person name="Rizzo M."/>
            <person name="Lee K."/>
            <person name="Kosack D."/>
            <person name="Moestl D."/>
            <person name="Wedler H."/>
            <person name="Lauber J."/>
            <person name="Stjepandic D."/>
            <person name="Hoheisel J."/>
            <person name="Straetz M."/>
            <person name="Heim S."/>
            <person name="Kiewitz C."/>
            <person name="Eisen J.A."/>
            <person name="Timmis K.N."/>
            <person name="Duesterhoeft A."/>
            <person name="Tuemmler B."/>
            <person name="Fraser C.M."/>
        </authorList>
    </citation>
    <scope>NUCLEOTIDE SEQUENCE [LARGE SCALE GENOMIC DNA]</scope>
    <source>
        <strain>ATCC 47054 / DSM 6125 / CFBP 8728 / NCIMB 11950 / KT2440</strain>
    </source>
</reference>
<proteinExistence type="inferred from homology"/>
<organism>
    <name type="scientific">Pseudomonas putida (strain ATCC 47054 / DSM 6125 / CFBP 8728 / NCIMB 11950 / KT2440)</name>
    <dbReference type="NCBI Taxonomy" id="160488"/>
    <lineage>
        <taxon>Bacteria</taxon>
        <taxon>Pseudomonadati</taxon>
        <taxon>Pseudomonadota</taxon>
        <taxon>Gammaproteobacteria</taxon>
        <taxon>Pseudomonadales</taxon>
        <taxon>Pseudomonadaceae</taxon>
        <taxon>Pseudomonas</taxon>
    </lineage>
</organism>
<gene>
    <name type="ordered locus">PP_5221</name>
</gene>
<dbReference type="EMBL" id="AE015451">
    <property type="protein sequence ID" value="AAN70786.1"/>
    <property type="status" value="ALT_INIT"/>
    <property type="molecule type" value="Genomic_DNA"/>
</dbReference>
<dbReference type="RefSeq" id="NP_747322.1">
    <property type="nucleotide sequence ID" value="NC_002947.4"/>
</dbReference>
<dbReference type="RefSeq" id="WP_014592810.1">
    <property type="nucleotide sequence ID" value="NZ_CP169744.1"/>
</dbReference>
<dbReference type="SMR" id="Q88CG0"/>
<dbReference type="PaxDb" id="160488-PP_5221"/>
<dbReference type="KEGG" id="ppu:PP_5221"/>
<dbReference type="PATRIC" id="fig|160488.4.peg.5569"/>
<dbReference type="eggNOG" id="COG1671">
    <property type="taxonomic scope" value="Bacteria"/>
</dbReference>
<dbReference type="HOGENOM" id="CLU_106619_2_1_6"/>
<dbReference type="OrthoDB" id="9798918at2"/>
<dbReference type="PhylomeDB" id="Q88CG0"/>
<dbReference type="Proteomes" id="UP000000556">
    <property type="component" value="Chromosome"/>
</dbReference>
<dbReference type="CDD" id="cd18720">
    <property type="entry name" value="PIN_YqxD-like"/>
    <property type="match status" value="1"/>
</dbReference>
<dbReference type="HAMAP" id="MF_00489">
    <property type="entry name" value="UPF0178"/>
    <property type="match status" value="1"/>
</dbReference>
<dbReference type="InterPro" id="IPR003791">
    <property type="entry name" value="UPF0178"/>
</dbReference>
<dbReference type="NCBIfam" id="NF001095">
    <property type="entry name" value="PRK00124.1"/>
    <property type="match status" value="1"/>
</dbReference>
<dbReference type="PANTHER" id="PTHR35146">
    <property type="entry name" value="UPF0178 PROTEIN YAII"/>
    <property type="match status" value="1"/>
</dbReference>
<dbReference type="PANTHER" id="PTHR35146:SF1">
    <property type="entry name" value="UPF0178 PROTEIN YAII"/>
    <property type="match status" value="1"/>
</dbReference>
<dbReference type="Pfam" id="PF02639">
    <property type="entry name" value="DUF188"/>
    <property type="match status" value="1"/>
</dbReference>
<keyword id="KW-1185">Reference proteome</keyword>